<keyword id="KW-0072">Autophagy</keyword>
<keyword id="KW-0963">Cytoplasm</keyword>
<keyword id="KW-0653">Protein transport</keyword>
<keyword id="KW-0813">Transport</keyword>
<keyword id="KW-0833">Ubl conjugation pathway</keyword>
<organism>
    <name type="scientific">Saccharomyces cerevisiae (strain YJM789)</name>
    <name type="common">Baker's yeast</name>
    <dbReference type="NCBI Taxonomy" id="307796"/>
    <lineage>
        <taxon>Eukaryota</taxon>
        <taxon>Fungi</taxon>
        <taxon>Dikarya</taxon>
        <taxon>Ascomycota</taxon>
        <taxon>Saccharomycotina</taxon>
        <taxon>Saccharomycetes</taxon>
        <taxon>Saccharomycetales</taxon>
        <taxon>Saccharomycetaceae</taxon>
        <taxon>Saccharomyces</taxon>
    </lineage>
</organism>
<protein>
    <recommendedName>
        <fullName>Ubiquitin-like modifier-activating enzyme ATG7</fullName>
    </recommendedName>
    <alternativeName>
        <fullName>ATG12-activating enzyme E1 ATG7</fullName>
    </alternativeName>
    <alternativeName>
        <fullName>Autophagy-related protein 7</fullName>
    </alternativeName>
    <alternativeName>
        <fullName>Cytoplasm to vacuole targeting protein 2</fullName>
    </alternativeName>
</protein>
<proteinExistence type="inferred from homology"/>
<sequence length="630" mass="71410">MSSERVLNYAPAFKSFLDTSFFQELSRLKLDVLKLDSTCQPLTVNLDLHNIPKSADQVPLFLTNRSFEKQNNKRTNEVPLQGSIFNFNVLDEFKNLDKQLFLHQRALECWEDGIKDINKCVSFVIISFADLKKYRFYYWLGVPCFQRPSSTVLHVRPEPSLKGLFSKCQKWFDVNYSKWVCILDADDEIVNYDKCIIRKTKVLAIRDTSTMENVPSALTKNFLSVLQYDVPDLIDFKLLIIRQNEGSFALNATFASSDPQSSSSNPDMKVSGWERNVQGKLAPRVVDLSSLLDPLKIADQSVDLNLKLMKWRILPDLNLDIIKNTKVLLLGAGTLGCYVSRALIAWGVRKITFVDNGTVSYSNPVRQALYNFEDCGKPKAELAAASLKRIFPLMDATGVKLSIPMIGHKLVNEEAQHKDFDRLRALIKEHDIIFLLVDSRESRWLPSLLSNIENKTVINAALGFDSYLVMRHGNRDEQSSKQLGCYFCHDVVAPTDSLTDRTLDQMCTVTRPGVAMMASSLAVELMTSLLQTKYSGSETTVLGDIPHQIRGFLHNFSILKLETPAYEHCPACSPKVIEAFTDLGWEFVKKALEHPLYLEEISGLSVMKQEVEQLGNDVFEWEDDESDEIA</sequence>
<gene>
    <name type="primary">ATG7</name>
    <name type="synonym">APG7</name>
    <name type="synonym">CVT2</name>
    <name type="ORF">SCY_2563</name>
</gene>
<dbReference type="EMBL" id="AAFW02000082">
    <property type="protein sequence ID" value="EDN62410.1"/>
    <property type="molecule type" value="Genomic_DNA"/>
</dbReference>
<dbReference type="SMR" id="A6ZT79"/>
<dbReference type="HOGENOM" id="CLU_012998_2_1_1"/>
<dbReference type="OrthoDB" id="5096at4893"/>
<dbReference type="Proteomes" id="UP000007060">
    <property type="component" value="Unassembled WGS sequence"/>
</dbReference>
<dbReference type="GO" id="GO:0000407">
    <property type="term" value="C:phagophore assembly site"/>
    <property type="evidence" value="ECO:0007669"/>
    <property type="project" value="UniProtKB-SubCell"/>
</dbReference>
<dbReference type="GO" id="GO:0019778">
    <property type="term" value="F:Atg12 activating enzyme activity"/>
    <property type="evidence" value="ECO:0007669"/>
    <property type="project" value="TreeGrafter"/>
</dbReference>
<dbReference type="GO" id="GO:0019779">
    <property type="term" value="F:Atg8 activating enzyme activity"/>
    <property type="evidence" value="ECO:0007669"/>
    <property type="project" value="TreeGrafter"/>
</dbReference>
<dbReference type="GO" id="GO:0000045">
    <property type="term" value="P:autophagosome assembly"/>
    <property type="evidence" value="ECO:0007669"/>
    <property type="project" value="TreeGrafter"/>
</dbReference>
<dbReference type="GO" id="GO:0000422">
    <property type="term" value="P:autophagy of mitochondrion"/>
    <property type="evidence" value="ECO:0007669"/>
    <property type="project" value="TreeGrafter"/>
</dbReference>
<dbReference type="GO" id="GO:0006995">
    <property type="term" value="P:cellular response to nitrogen starvation"/>
    <property type="evidence" value="ECO:0007669"/>
    <property type="project" value="TreeGrafter"/>
</dbReference>
<dbReference type="GO" id="GO:0034727">
    <property type="term" value="P:piecemeal microautophagy of the nucleus"/>
    <property type="evidence" value="ECO:0007669"/>
    <property type="project" value="TreeGrafter"/>
</dbReference>
<dbReference type="GO" id="GO:0032446">
    <property type="term" value="P:protein modification by small protein conjugation"/>
    <property type="evidence" value="ECO:0007669"/>
    <property type="project" value="TreeGrafter"/>
</dbReference>
<dbReference type="GO" id="GO:0015031">
    <property type="term" value="P:protein transport"/>
    <property type="evidence" value="ECO:0007669"/>
    <property type="project" value="UniProtKB-KW"/>
</dbReference>
<dbReference type="CDD" id="cd01486">
    <property type="entry name" value="Apg7"/>
    <property type="match status" value="1"/>
</dbReference>
<dbReference type="FunFam" id="3.40.50.720:FF:000243">
    <property type="entry name" value="Ubiquitin-like modifier-activating enzyme ATG7"/>
    <property type="match status" value="1"/>
</dbReference>
<dbReference type="Gene3D" id="3.40.50.720">
    <property type="entry name" value="NAD(P)-binding Rossmann-like Domain"/>
    <property type="match status" value="1"/>
</dbReference>
<dbReference type="Gene3D" id="3.40.140.100">
    <property type="entry name" value="Ubiquitin-like modifier-activating enzyme ATG7 C-terminal domain"/>
    <property type="match status" value="1"/>
</dbReference>
<dbReference type="Gene3D" id="3.40.140.70">
    <property type="entry name" value="Ubiquitin-like modifier-activating enzyme ATG7 N-terminal domain"/>
    <property type="match status" value="1"/>
</dbReference>
<dbReference type="InterPro" id="IPR006285">
    <property type="entry name" value="Atg7"/>
</dbReference>
<dbReference type="InterPro" id="IPR032197">
    <property type="entry name" value="Atg7_N"/>
</dbReference>
<dbReference type="InterPro" id="IPR042522">
    <property type="entry name" value="Atg7_N_1"/>
</dbReference>
<dbReference type="InterPro" id="IPR042523">
    <property type="entry name" value="Atg7_N_2"/>
</dbReference>
<dbReference type="InterPro" id="IPR045886">
    <property type="entry name" value="ThiF/MoeB/HesA"/>
</dbReference>
<dbReference type="InterPro" id="IPR000594">
    <property type="entry name" value="ThiF_NAD_FAD-bd"/>
</dbReference>
<dbReference type="InterPro" id="IPR035985">
    <property type="entry name" value="Ubiquitin-activating_enz"/>
</dbReference>
<dbReference type="NCBIfam" id="TIGR01381">
    <property type="entry name" value="E1_like_apg7"/>
    <property type="match status" value="1"/>
</dbReference>
<dbReference type="PANTHER" id="PTHR10953">
    <property type="entry name" value="UBIQUITIN-ACTIVATING ENZYME E1"/>
    <property type="match status" value="1"/>
</dbReference>
<dbReference type="PANTHER" id="PTHR10953:SF3">
    <property type="entry name" value="UBIQUITIN-LIKE MODIFIER-ACTIVATING ENZYME ATG7"/>
    <property type="match status" value="1"/>
</dbReference>
<dbReference type="Pfam" id="PF16420">
    <property type="entry name" value="ATG7_N"/>
    <property type="match status" value="1"/>
</dbReference>
<dbReference type="Pfam" id="PF00899">
    <property type="entry name" value="ThiF"/>
    <property type="match status" value="1"/>
</dbReference>
<dbReference type="SUPFAM" id="SSF69572">
    <property type="entry name" value="Activating enzymes of the ubiquitin-like proteins"/>
    <property type="match status" value="1"/>
</dbReference>
<accession>A6ZT79</accession>
<feature type="chain" id="PRO_0000317873" description="Ubiquitin-like modifier-activating enzyme ATG7">
    <location>
        <begin position="1"/>
        <end position="630"/>
    </location>
</feature>
<feature type="short sequence motif" description="GXGXXG motif" evidence="1">
    <location>
        <begin position="331"/>
        <end position="336"/>
    </location>
</feature>
<feature type="active site" description="Glycyl thioester intermediate" evidence="1">
    <location>
        <position position="507"/>
    </location>
</feature>
<reference key="1">
    <citation type="journal article" date="2007" name="Proc. Natl. Acad. Sci. U.S.A.">
        <title>Genome sequencing and comparative analysis of Saccharomyces cerevisiae strain YJM789.</title>
        <authorList>
            <person name="Wei W."/>
            <person name="McCusker J.H."/>
            <person name="Hyman R.W."/>
            <person name="Jones T."/>
            <person name="Ning Y."/>
            <person name="Cao Z."/>
            <person name="Gu Z."/>
            <person name="Bruno D."/>
            <person name="Miranda M."/>
            <person name="Nguyen M."/>
            <person name="Wilhelmy J."/>
            <person name="Komp C."/>
            <person name="Tamse R."/>
            <person name="Wang X."/>
            <person name="Jia P."/>
            <person name="Luedi P."/>
            <person name="Oefner P.J."/>
            <person name="David L."/>
            <person name="Dietrich F.S."/>
            <person name="Li Y."/>
            <person name="Davis R.W."/>
            <person name="Steinmetz L.M."/>
        </authorList>
    </citation>
    <scope>NUCLEOTIDE SEQUENCE [LARGE SCALE GENOMIC DNA]</scope>
    <source>
        <strain>YJM789</strain>
    </source>
</reference>
<evidence type="ECO:0000250" key="1"/>
<evidence type="ECO:0000305" key="2"/>
<name>ATG7_YEAS7</name>
<comment type="function">
    <text evidence="1">E1-like activating enzyme involved in the 2 ubiquitin-like systems required for cytoplasm to vacuole transport (Cvt) and autophagy. Activates ATG12 for its conjugation with ATG5 and ATG8 for its conjugation with phosphatidylethanolamine. Both systems are needed for the ATG8 association to Cvt vesicles and autophagosomes membranes. Autophagy is essential for maintenance of amino acid levels and protein synthesis under nitrogen starvation. Required for selective autophagic degradation of the nucleus (nucleophagy) as well as for mitophagy which contributes to regulate mitochondrial quantity and quality by eliminating the mitochondria to a basal level to fulfill cellular energy requirements and preventing excess ROS production. Plays a role in the regulation of filamentous growth and chronological longevity (By similarity).</text>
</comment>
<comment type="subunit">
    <text evidence="1">Homodimer. Interacts with ATG8 through a thioester bond between Cys-507 and the C-terminal 'Gly-116' of ATG8 and with ATG12 through a thioester bond between Cys-507 and the C-terminal 'Gly-186' of ATG12. Also interacts with ATG3.</text>
</comment>
<comment type="subcellular location">
    <subcellularLocation>
        <location evidence="1">Cytoplasm</location>
    </subcellularLocation>
    <subcellularLocation>
        <location evidence="1">Preautophagosomal structure</location>
    </subcellularLocation>
</comment>
<comment type="domain">
    <text evidence="1">The C-terminal 40 residues are required for homodimerization, as well as the interactions with ATG3, ATG8 and ATG12; and the C-terminal 17 residues are required for the ATG8 lipidation.</text>
</comment>
<comment type="domain">
    <text evidence="1">The GxGxxG motif is important for the function, possibly through binding with ATP.</text>
</comment>
<comment type="similarity">
    <text evidence="2">Belongs to the ATG7 family.</text>
</comment>